<keyword id="KW-0025">Alternative splicing</keyword>
<keyword id="KW-1003">Cell membrane</keyword>
<keyword id="KW-0325">Glycoprotein</keyword>
<keyword id="KW-0433">Leucine-rich repeat</keyword>
<keyword id="KW-0472">Membrane</keyword>
<keyword id="KW-0628">Postsynaptic cell membrane</keyword>
<keyword id="KW-1267">Proteomics identification</keyword>
<keyword id="KW-1185">Reference proteome</keyword>
<keyword id="KW-0677">Repeat</keyword>
<keyword id="KW-0732">Signal</keyword>
<keyword id="KW-0770">Synapse</keyword>
<keyword id="KW-0812">Transmembrane</keyword>
<keyword id="KW-1133">Transmembrane helix</keyword>
<accession>Q86VH5</accession>
<accession>A8K2A3</accession>
<accession>Q2NKX7</accession>
<accession>Q6N0A3</accession>
<reference key="1">
    <citation type="journal article" date="2003" name="Genomics">
        <title>A novel gene family encoding leucine-rich repeat transmembrane proteins differentially expressed in the nervous system.</title>
        <authorList>
            <person name="Lauren J."/>
            <person name="Airaksinen M.S."/>
            <person name="Saarma M."/>
            <person name="Timmusk T.T."/>
        </authorList>
    </citation>
    <scope>NUCLEOTIDE SEQUENCE [MRNA] (ISOFORM 2)</scope>
    <scope>TISSUE SPECIFICITY</scope>
</reference>
<reference key="2">
    <citation type="journal article" date="2003" name="Genome Res.">
        <title>The secreted protein discovery initiative (SPDI), a large-scale effort to identify novel human secreted and transmembrane proteins: a bioinformatics assessment.</title>
        <authorList>
            <person name="Clark H.F."/>
            <person name="Gurney A.L."/>
            <person name="Abaya E."/>
            <person name="Baker K."/>
            <person name="Baldwin D.T."/>
            <person name="Brush J."/>
            <person name="Chen J."/>
            <person name="Chow B."/>
            <person name="Chui C."/>
            <person name="Crowley C."/>
            <person name="Currell B."/>
            <person name="Deuel B."/>
            <person name="Dowd P."/>
            <person name="Eaton D."/>
            <person name="Foster J.S."/>
            <person name="Grimaldi C."/>
            <person name="Gu Q."/>
            <person name="Hass P.E."/>
            <person name="Heldens S."/>
            <person name="Huang A."/>
            <person name="Kim H.S."/>
            <person name="Klimowski L."/>
            <person name="Jin Y."/>
            <person name="Johnson S."/>
            <person name="Lee J."/>
            <person name="Lewis L."/>
            <person name="Liao D."/>
            <person name="Mark M.R."/>
            <person name="Robbie E."/>
            <person name="Sanchez C."/>
            <person name="Schoenfeld J."/>
            <person name="Seshagiri S."/>
            <person name="Simmons L."/>
            <person name="Singh J."/>
            <person name="Smith V."/>
            <person name="Stinson J."/>
            <person name="Vagts A."/>
            <person name="Vandlen R.L."/>
            <person name="Watanabe C."/>
            <person name="Wieand D."/>
            <person name="Woods K."/>
            <person name="Xie M.-H."/>
            <person name="Yansura D.G."/>
            <person name="Yi S."/>
            <person name="Yu G."/>
            <person name="Yuan J."/>
            <person name="Zhang M."/>
            <person name="Zhang Z."/>
            <person name="Goddard A.D."/>
            <person name="Wood W.I."/>
            <person name="Godowski P.J."/>
            <person name="Gray A.M."/>
        </authorList>
    </citation>
    <scope>NUCLEOTIDE SEQUENCE [LARGE SCALE MRNA] (ISOFORM 2)</scope>
</reference>
<reference key="3">
    <citation type="journal article" date="2004" name="Nat. Genet.">
        <title>Complete sequencing and characterization of 21,243 full-length human cDNAs.</title>
        <authorList>
            <person name="Ota T."/>
            <person name="Suzuki Y."/>
            <person name="Nishikawa T."/>
            <person name="Otsuki T."/>
            <person name="Sugiyama T."/>
            <person name="Irie R."/>
            <person name="Wakamatsu A."/>
            <person name="Hayashi K."/>
            <person name="Sato H."/>
            <person name="Nagai K."/>
            <person name="Kimura K."/>
            <person name="Makita H."/>
            <person name="Sekine M."/>
            <person name="Obayashi M."/>
            <person name="Nishi T."/>
            <person name="Shibahara T."/>
            <person name="Tanaka T."/>
            <person name="Ishii S."/>
            <person name="Yamamoto J."/>
            <person name="Saito K."/>
            <person name="Kawai Y."/>
            <person name="Isono Y."/>
            <person name="Nakamura Y."/>
            <person name="Nagahari K."/>
            <person name="Murakami K."/>
            <person name="Yasuda T."/>
            <person name="Iwayanagi T."/>
            <person name="Wagatsuma M."/>
            <person name="Shiratori A."/>
            <person name="Sudo H."/>
            <person name="Hosoiri T."/>
            <person name="Kaku Y."/>
            <person name="Kodaira H."/>
            <person name="Kondo H."/>
            <person name="Sugawara M."/>
            <person name="Takahashi M."/>
            <person name="Kanda K."/>
            <person name="Yokoi T."/>
            <person name="Furuya T."/>
            <person name="Kikkawa E."/>
            <person name="Omura Y."/>
            <person name="Abe K."/>
            <person name="Kamihara K."/>
            <person name="Katsuta N."/>
            <person name="Sato K."/>
            <person name="Tanikawa M."/>
            <person name="Yamazaki M."/>
            <person name="Ninomiya K."/>
            <person name="Ishibashi T."/>
            <person name="Yamashita H."/>
            <person name="Murakawa K."/>
            <person name="Fujimori K."/>
            <person name="Tanai H."/>
            <person name="Kimata M."/>
            <person name="Watanabe M."/>
            <person name="Hiraoka S."/>
            <person name="Chiba Y."/>
            <person name="Ishida S."/>
            <person name="Ono Y."/>
            <person name="Takiguchi S."/>
            <person name="Watanabe S."/>
            <person name="Yosida M."/>
            <person name="Hotuta T."/>
            <person name="Kusano J."/>
            <person name="Kanehori K."/>
            <person name="Takahashi-Fujii A."/>
            <person name="Hara H."/>
            <person name="Tanase T.-O."/>
            <person name="Nomura Y."/>
            <person name="Togiya S."/>
            <person name="Komai F."/>
            <person name="Hara R."/>
            <person name="Takeuchi K."/>
            <person name="Arita M."/>
            <person name="Imose N."/>
            <person name="Musashino K."/>
            <person name="Yuuki H."/>
            <person name="Oshima A."/>
            <person name="Sasaki N."/>
            <person name="Aotsuka S."/>
            <person name="Yoshikawa Y."/>
            <person name="Matsunawa H."/>
            <person name="Ichihara T."/>
            <person name="Shiohata N."/>
            <person name="Sano S."/>
            <person name="Moriya S."/>
            <person name="Momiyama H."/>
            <person name="Satoh N."/>
            <person name="Takami S."/>
            <person name="Terashima Y."/>
            <person name="Suzuki O."/>
            <person name="Nakagawa S."/>
            <person name="Senoh A."/>
            <person name="Mizoguchi H."/>
            <person name="Goto Y."/>
            <person name="Shimizu F."/>
            <person name="Wakebe H."/>
            <person name="Hishigaki H."/>
            <person name="Watanabe T."/>
            <person name="Sugiyama A."/>
            <person name="Takemoto M."/>
            <person name="Kawakami B."/>
            <person name="Yamazaki M."/>
            <person name="Watanabe K."/>
            <person name="Kumagai A."/>
            <person name="Itakura S."/>
            <person name="Fukuzumi Y."/>
            <person name="Fujimori Y."/>
            <person name="Komiyama M."/>
            <person name="Tashiro H."/>
            <person name="Tanigami A."/>
            <person name="Fujiwara T."/>
            <person name="Ono T."/>
            <person name="Yamada K."/>
            <person name="Fujii Y."/>
            <person name="Ozaki K."/>
            <person name="Hirao M."/>
            <person name="Ohmori Y."/>
            <person name="Kawabata A."/>
            <person name="Hikiji T."/>
            <person name="Kobatake N."/>
            <person name="Inagaki H."/>
            <person name="Ikema Y."/>
            <person name="Okamoto S."/>
            <person name="Okitani R."/>
            <person name="Kawakami T."/>
            <person name="Noguchi S."/>
            <person name="Itoh T."/>
            <person name="Shigeta K."/>
            <person name="Senba T."/>
            <person name="Matsumura K."/>
            <person name="Nakajima Y."/>
            <person name="Mizuno T."/>
            <person name="Morinaga M."/>
            <person name="Sasaki M."/>
            <person name="Togashi T."/>
            <person name="Oyama M."/>
            <person name="Hata H."/>
            <person name="Watanabe M."/>
            <person name="Komatsu T."/>
            <person name="Mizushima-Sugano J."/>
            <person name="Satoh T."/>
            <person name="Shirai Y."/>
            <person name="Takahashi Y."/>
            <person name="Nakagawa K."/>
            <person name="Okumura K."/>
            <person name="Nagase T."/>
            <person name="Nomura N."/>
            <person name="Kikuchi H."/>
            <person name="Masuho Y."/>
            <person name="Yamashita R."/>
            <person name="Nakai K."/>
            <person name="Yada T."/>
            <person name="Nakamura Y."/>
            <person name="Ohara O."/>
            <person name="Isogai T."/>
            <person name="Sugano S."/>
        </authorList>
    </citation>
    <scope>NUCLEOTIDE SEQUENCE [LARGE SCALE MRNA] (ISOFORM 1)</scope>
    <source>
        <tissue>Thalamus</tissue>
    </source>
</reference>
<reference key="4">
    <citation type="journal article" date="2007" name="BMC Genomics">
        <title>The full-ORF clone resource of the German cDNA consortium.</title>
        <authorList>
            <person name="Bechtel S."/>
            <person name="Rosenfelder H."/>
            <person name="Duda A."/>
            <person name="Schmidt C.P."/>
            <person name="Ernst U."/>
            <person name="Wellenreuther R."/>
            <person name="Mehrle A."/>
            <person name="Schuster C."/>
            <person name="Bahr A."/>
            <person name="Bloecker H."/>
            <person name="Heubner D."/>
            <person name="Hoerlein A."/>
            <person name="Michel G."/>
            <person name="Wedler H."/>
            <person name="Koehrer K."/>
            <person name="Ottenwaelder B."/>
            <person name="Poustka A."/>
            <person name="Wiemann S."/>
            <person name="Schupp I."/>
        </authorList>
    </citation>
    <scope>NUCLEOTIDE SEQUENCE [LARGE SCALE MRNA] (ISOFORM 1)</scope>
    <source>
        <tissue>Endometrium</tissue>
    </source>
</reference>
<reference key="5">
    <citation type="journal article" date="2004" name="Genome Res.">
        <title>The status, quality, and expansion of the NIH full-length cDNA project: the Mammalian Gene Collection (MGC).</title>
        <authorList>
            <consortium name="The MGC Project Team"/>
        </authorList>
    </citation>
    <scope>NUCLEOTIDE SEQUENCE [LARGE SCALE MRNA] (ISOFORM 1)</scope>
    <source>
        <tissue>Brain</tissue>
    </source>
</reference>
<gene>
    <name type="primary">LRRTM3</name>
    <name type="ORF">UNQ803/PRO1693</name>
</gene>
<feature type="signal peptide" evidence="2">
    <location>
        <begin position="1"/>
        <end position="30"/>
    </location>
</feature>
<feature type="chain" id="PRO_0000018355" description="Leucine-rich repeat transmembrane neuronal protein 3">
    <location>
        <begin position="31"/>
        <end position="581"/>
    </location>
</feature>
<feature type="topological domain" description="Extracellular" evidence="2">
    <location>
        <begin position="31"/>
        <end position="419"/>
    </location>
</feature>
<feature type="transmembrane region" description="Helical" evidence="2">
    <location>
        <begin position="420"/>
        <end position="440"/>
    </location>
</feature>
<feature type="topological domain" description="Cytoplasmic" evidence="2">
    <location>
        <begin position="441"/>
        <end position="581"/>
    </location>
</feature>
<feature type="domain" description="LRRNT">
    <location>
        <begin position="31"/>
        <end position="61"/>
    </location>
</feature>
<feature type="repeat" description="LRR 1">
    <location>
        <begin position="63"/>
        <end position="83"/>
    </location>
</feature>
<feature type="repeat" description="LRR 2">
    <location>
        <begin position="86"/>
        <end position="107"/>
    </location>
</feature>
<feature type="repeat" description="LRR 3">
    <location>
        <begin position="110"/>
        <end position="131"/>
    </location>
</feature>
<feature type="repeat" description="LRR 4">
    <location>
        <begin position="134"/>
        <end position="155"/>
    </location>
</feature>
<feature type="repeat" description="LRR 5">
    <location>
        <begin position="158"/>
        <end position="179"/>
    </location>
</feature>
<feature type="repeat" description="LRR 6">
    <location>
        <begin position="182"/>
        <end position="203"/>
    </location>
</feature>
<feature type="repeat" description="LRR 7">
    <location>
        <begin position="206"/>
        <end position="226"/>
    </location>
</feature>
<feature type="repeat" description="LRR 8">
    <location>
        <begin position="230"/>
        <end position="251"/>
    </location>
</feature>
<feature type="repeat" description="LRR 9">
    <location>
        <begin position="254"/>
        <end position="275"/>
    </location>
</feature>
<feature type="repeat" description="LRR 10">
    <location>
        <begin position="279"/>
        <end position="300"/>
    </location>
</feature>
<feature type="domain" description="LRRCT">
    <location>
        <begin position="312"/>
        <end position="363"/>
    </location>
</feature>
<feature type="region of interest" description="Disordered" evidence="3">
    <location>
        <begin position="377"/>
        <end position="408"/>
    </location>
</feature>
<feature type="glycosylation site" description="N-linked (GlcNAc...) asparagine" evidence="2">
    <location>
        <position position="126"/>
    </location>
</feature>
<feature type="glycosylation site" description="N-linked (GlcNAc...) asparagine" evidence="2">
    <location>
        <position position="357"/>
    </location>
</feature>
<feature type="splice variant" id="VSP_014189" description="In isoform 2." evidence="5 6">
    <original>I</original>
    <variation>V</variation>
    <location>
        <position position="513"/>
    </location>
</feature>
<feature type="splice variant" id="VSP_014190" description="In isoform 2." evidence="5 6">
    <location>
        <begin position="514"/>
        <end position="581"/>
    </location>
</feature>
<feature type="sequence conflict" description="In Ref. 4; CAE45717." evidence="7" ref="4">
    <original>E</original>
    <variation>G</variation>
    <location>
        <position position="266"/>
    </location>
</feature>
<proteinExistence type="evidence at protein level"/>
<protein>
    <recommendedName>
        <fullName>Leucine-rich repeat transmembrane neuronal protein 3</fullName>
    </recommendedName>
</protein>
<evidence type="ECO:0000250" key="1"/>
<evidence type="ECO:0000255" key="2"/>
<evidence type="ECO:0000256" key="3">
    <source>
        <dbReference type="SAM" id="MobiDB-lite"/>
    </source>
</evidence>
<evidence type="ECO:0000269" key="4">
    <source>
    </source>
</evidence>
<evidence type="ECO:0000303" key="5">
    <source>
    </source>
</evidence>
<evidence type="ECO:0000303" key="6">
    <source>
    </source>
</evidence>
<evidence type="ECO:0000305" key="7"/>
<comment type="function">
    <text evidence="1">Exhibits a limited synaptogenic activity in vitro, restricted to excitatory presynaptic differentiation (By similarity). May play a role in the development and maintenance of the vertebrate nervous system.</text>
</comment>
<comment type="subcellular location">
    <subcellularLocation>
        <location evidence="1">Cell membrane</location>
        <topology evidence="1">Single-pass type I membrane protein</topology>
    </subcellularLocation>
    <subcellularLocation>
        <location evidence="1">Postsynaptic cell membrane</location>
        <topology evidence="1">Single-pass type I membrane protein</topology>
    </subcellularLocation>
</comment>
<comment type="alternative products">
    <event type="alternative splicing"/>
    <isoform>
        <id>Q86VH5-1</id>
        <name>1</name>
        <sequence type="displayed"/>
    </isoform>
    <isoform>
        <id>Q86VH5-2</id>
        <name>2</name>
        <sequence type="described" ref="VSP_014189 VSP_014190"/>
    </isoform>
</comment>
<comment type="tissue specificity">
    <text evidence="4">Expressed in neuronal tissues.</text>
</comment>
<comment type="similarity">
    <text evidence="7">Belongs to the LRRTM family.</text>
</comment>
<sequence length="581" mass="65896">MGFNVIRLLSGSAVALVIAPTVLLTMLSSAERGCPKGCRCEGKMVYCESQKLQEIPSSISAGCLGLSLRYNSLQKLKYNQFKGLNQLTWLYLDHNHISNIDENAFNGIRRLKELILSSNRISYFLNNTFRPVTNLRNLDLSYNQLHSLGSEQFRGLRKLLSLHLRSNSLRTIPVRIFQDCRNLELLDLGYNRIRSLARNVFAGMIRLKELHLEHNQFSKLNLALFPRLVSLQNLYLQWNKISVIGQTMSWTWSSLQRLDLSGNEIEAFSGPSVFQCVPNLQRLNLDSNKLTFIGQEILDSWISLNDISLAGNIWECSRNICSLVNWLKSFKGLRENTIICASPKELQGVNVIDAVKNYSICGKSTTERFDLARALPKPTFKPKLPRPKHESKPPLPPTVGATEPGPETDADAEHISFHKIIAGSVALFLSVLVILLVIYVSWKRYPASMKQLQQRSLMRRHRKKKRQSLKQMTPSTQEFYVDYKPTNTETSEMLLNGTGPCTYNKSGSRECEIPLSMNVSTFLAYDQPTISYCGVHHELLSHKSFETNAQEDTMETHLETELDLSTITTAGRISDHKQQLA</sequence>
<name>LRRT3_HUMAN</name>
<organism>
    <name type="scientific">Homo sapiens</name>
    <name type="common">Human</name>
    <dbReference type="NCBI Taxonomy" id="9606"/>
    <lineage>
        <taxon>Eukaryota</taxon>
        <taxon>Metazoa</taxon>
        <taxon>Chordata</taxon>
        <taxon>Craniata</taxon>
        <taxon>Vertebrata</taxon>
        <taxon>Euteleostomi</taxon>
        <taxon>Mammalia</taxon>
        <taxon>Eutheria</taxon>
        <taxon>Euarchontoglires</taxon>
        <taxon>Primates</taxon>
        <taxon>Haplorrhini</taxon>
        <taxon>Catarrhini</taxon>
        <taxon>Hominidae</taxon>
        <taxon>Homo</taxon>
    </lineage>
</organism>
<dbReference type="EMBL" id="AY182028">
    <property type="protein sequence ID" value="AAO67549.1"/>
    <property type="molecule type" value="mRNA"/>
</dbReference>
<dbReference type="EMBL" id="AY358315">
    <property type="protein sequence ID" value="AAQ88681.1"/>
    <property type="molecule type" value="mRNA"/>
</dbReference>
<dbReference type="EMBL" id="AK290168">
    <property type="protein sequence ID" value="BAF82857.1"/>
    <property type="molecule type" value="mRNA"/>
</dbReference>
<dbReference type="EMBL" id="BX640611">
    <property type="protein sequence ID" value="CAE45717.1"/>
    <property type="molecule type" value="mRNA"/>
</dbReference>
<dbReference type="EMBL" id="BC111492">
    <property type="protein sequence ID" value="AAI11493.1"/>
    <property type="molecule type" value="mRNA"/>
</dbReference>
<dbReference type="EMBL" id="BC113715">
    <property type="protein sequence ID" value="AAI13716.1"/>
    <property type="molecule type" value="mRNA"/>
</dbReference>
<dbReference type="EMBL" id="BC113717">
    <property type="protein sequence ID" value="AAI13718.1"/>
    <property type="molecule type" value="mRNA"/>
</dbReference>
<dbReference type="CCDS" id="CCDS7270.1">
    <molecule id="Q86VH5-1"/>
</dbReference>
<dbReference type="RefSeq" id="NP_821079.3">
    <molecule id="Q86VH5-1"/>
    <property type="nucleotide sequence ID" value="NM_178011.4"/>
</dbReference>
<dbReference type="SMR" id="Q86VH5"/>
<dbReference type="BioGRID" id="131481">
    <property type="interactions" value="19"/>
</dbReference>
<dbReference type="FunCoup" id="Q86VH5">
    <property type="interactions" value="88"/>
</dbReference>
<dbReference type="IntAct" id="Q86VH5">
    <property type="interactions" value="17"/>
</dbReference>
<dbReference type="STRING" id="9606.ENSP00000355187"/>
<dbReference type="GlyCosmos" id="Q86VH5">
    <property type="glycosylation" value="3 sites, 1 glycan"/>
</dbReference>
<dbReference type="GlyGen" id="Q86VH5">
    <property type="glycosylation" value="4 sites, 1 O-linked glycan (1 site)"/>
</dbReference>
<dbReference type="iPTMnet" id="Q86VH5"/>
<dbReference type="PhosphoSitePlus" id="Q86VH5"/>
<dbReference type="BioMuta" id="LRRTM3"/>
<dbReference type="DMDM" id="68052341"/>
<dbReference type="jPOST" id="Q86VH5"/>
<dbReference type="MassIVE" id="Q86VH5"/>
<dbReference type="PaxDb" id="9606-ENSP00000355187"/>
<dbReference type="PeptideAtlas" id="Q86VH5"/>
<dbReference type="ProteomicsDB" id="70020">
    <molecule id="Q86VH5-1"/>
</dbReference>
<dbReference type="ProteomicsDB" id="70021">
    <molecule id="Q86VH5-2"/>
</dbReference>
<dbReference type="Antibodypedia" id="14490">
    <property type="antibodies" value="78 antibodies from 25 providers"/>
</dbReference>
<dbReference type="DNASU" id="347731"/>
<dbReference type="Ensembl" id="ENST00000361320.5">
    <molecule id="Q86VH5-1"/>
    <property type="protein sequence ID" value="ENSP00000355187.3"/>
    <property type="gene ID" value="ENSG00000198739.11"/>
</dbReference>
<dbReference type="GeneID" id="347731"/>
<dbReference type="KEGG" id="hsa:347731"/>
<dbReference type="MANE-Select" id="ENST00000361320.5">
    <property type="protein sequence ID" value="ENSP00000355187.3"/>
    <property type="RefSeq nucleotide sequence ID" value="NM_178011.5"/>
    <property type="RefSeq protein sequence ID" value="NP_821079.3"/>
</dbReference>
<dbReference type="UCSC" id="uc001jmz.2">
    <molecule id="Q86VH5-1"/>
    <property type="organism name" value="human"/>
</dbReference>
<dbReference type="AGR" id="HGNC:19410"/>
<dbReference type="CTD" id="347731"/>
<dbReference type="DisGeNET" id="347731"/>
<dbReference type="GeneCards" id="LRRTM3"/>
<dbReference type="HGNC" id="HGNC:19410">
    <property type="gene designation" value="LRRTM3"/>
</dbReference>
<dbReference type="HPA" id="ENSG00000198739">
    <property type="expression patterns" value="Tissue enhanced (adrenal gland, brain, pituitary gland)"/>
</dbReference>
<dbReference type="MIM" id="610869">
    <property type="type" value="gene"/>
</dbReference>
<dbReference type="neXtProt" id="NX_Q86VH5"/>
<dbReference type="OpenTargets" id="ENSG00000198739"/>
<dbReference type="PharmGKB" id="PA134962991"/>
<dbReference type="VEuPathDB" id="HostDB:ENSG00000198739"/>
<dbReference type="eggNOG" id="KOG0619">
    <property type="taxonomic scope" value="Eukaryota"/>
</dbReference>
<dbReference type="GeneTree" id="ENSGT00940000160543"/>
<dbReference type="HOGENOM" id="CLU_032965_0_0_1"/>
<dbReference type="InParanoid" id="Q86VH5"/>
<dbReference type="OMA" id="MIYCESQ"/>
<dbReference type="OrthoDB" id="8731593at2759"/>
<dbReference type="PAN-GO" id="Q86VH5">
    <property type="GO annotations" value="2 GO annotations based on evolutionary models"/>
</dbReference>
<dbReference type="PhylomeDB" id="Q86VH5"/>
<dbReference type="TreeFam" id="TF332659"/>
<dbReference type="PathwayCommons" id="Q86VH5"/>
<dbReference type="Reactome" id="R-HSA-6794361">
    <property type="pathway name" value="Neurexins and neuroligins"/>
</dbReference>
<dbReference type="BioGRID-ORCS" id="347731">
    <property type="hits" value="17 hits in 1071 CRISPR screens"/>
</dbReference>
<dbReference type="ChiTaRS" id="LRRTM3">
    <property type="organism name" value="human"/>
</dbReference>
<dbReference type="GenomeRNAi" id="347731"/>
<dbReference type="Pharos" id="Q86VH5">
    <property type="development level" value="Tbio"/>
</dbReference>
<dbReference type="PRO" id="PR:Q86VH5"/>
<dbReference type="Proteomes" id="UP000005640">
    <property type="component" value="Chromosome 10"/>
</dbReference>
<dbReference type="RNAct" id="Q86VH5">
    <property type="molecule type" value="protein"/>
</dbReference>
<dbReference type="Bgee" id="ENSG00000198739">
    <property type="expression patterns" value="Expressed in corpus callosum and 85 other cell types or tissues"/>
</dbReference>
<dbReference type="GO" id="GO:0031012">
    <property type="term" value="C:extracellular matrix"/>
    <property type="evidence" value="ECO:0000318"/>
    <property type="project" value="GO_Central"/>
</dbReference>
<dbReference type="GO" id="GO:0005615">
    <property type="term" value="C:extracellular space"/>
    <property type="evidence" value="ECO:0000318"/>
    <property type="project" value="GO_Central"/>
</dbReference>
<dbReference type="GO" id="GO:0098978">
    <property type="term" value="C:glutamatergic synapse"/>
    <property type="evidence" value="ECO:0000314"/>
    <property type="project" value="SynGO"/>
</dbReference>
<dbReference type="GO" id="GO:0098839">
    <property type="term" value="C:postsynaptic density membrane"/>
    <property type="evidence" value="ECO:0007669"/>
    <property type="project" value="Ensembl"/>
</dbReference>
<dbReference type="GO" id="GO:1902004">
    <property type="term" value="P:positive regulation of amyloid-beta formation"/>
    <property type="evidence" value="ECO:0000315"/>
    <property type="project" value="MGI"/>
</dbReference>
<dbReference type="GO" id="GO:0051965">
    <property type="term" value="P:positive regulation of synapse assembly"/>
    <property type="evidence" value="ECO:0007669"/>
    <property type="project" value="Ensembl"/>
</dbReference>
<dbReference type="GO" id="GO:1905606">
    <property type="term" value="P:regulation of presynapse assembly"/>
    <property type="evidence" value="ECO:0000314"/>
    <property type="project" value="SynGO"/>
</dbReference>
<dbReference type="FunFam" id="3.80.10.10:FF:000005">
    <property type="entry name" value="leucine-rich repeat transmembrane neuronal protein 4"/>
    <property type="match status" value="1"/>
</dbReference>
<dbReference type="Gene3D" id="3.80.10.10">
    <property type="entry name" value="Ribonuclease Inhibitor"/>
    <property type="match status" value="1"/>
</dbReference>
<dbReference type="InterPro" id="IPR001611">
    <property type="entry name" value="Leu-rich_rpt"/>
</dbReference>
<dbReference type="InterPro" id="IPR003591">
    <property type="entry name" value="Leu-rich_rpt_typical-subtyp"/>
</dbReference>
<dbReference type="InterPro" id="IPR032675">
    <property type="entry name" value="LRR_dom_sf"/>
</dbReference>
<dbReference type="InterPro" id="IPR050541">
    <property type="entry name" value="LRR_TM_domain-containing"/>
</dbReference>
<dbReference type="InterPro" id="IPR000372">
    <property type="entry name" value="LRRNT"/>
</dbReference>
<dbReference type="PANTHER" id="PTHR24369">
    <property type="entry name" value="ANTIGEN BSP, PUTATIVE-RELATED"/>
    <property type="match status" value="1"/>
</dbReference>
<dbReference type="PANTHER" id="PTHR24369:SF218">
    <property type="entry name" value="LEUCINE RICH REPEAT TRANSMEMBRANE NEURONAL 3"/>
    <property type="match status" value="1"/>
</dbReference>
<dbReference type="Pfam" id="PF00560">
    <property type="entry name" value="LRR_1"/>
    <property type="match status" value="1"/>
</dbReference>
<dbReference type="Pfam" id="PF13855">
    <property type="entry name" value="LRR_8"/>
    <property type="match status" value="3"/>
</dbReference>
<dbReference type="SMART" id="SM00365">
    <property type="entry name" value="LRR_SD22"/>
    <property type="match status" value="5"/>
</dbReference>
<dbReference type="SMART" id="SM00369">
    <property type="entry name" value="LRR_TYP"/>
    <property type="match status" value="9"/>
</dbReference>
<dbReference type="SMART" id="SM00013">
    <property type="entry name" value="LRRNT"/>
    <property type="match status" value="1"/>
</dbReference>
<dbReference type="SUPFAM" id="SSF52058">
    <property type="entry name" value="L domain-like"/>
    <property type="match status" value="1"/>
</dbReference>
<dbReference type="PROSITE" id="PS51450">
    <property type="entry name" value="LRR"/>
    <property type="match status" value="9"/>
</dbReference>